<feature type="chain" id="PRO_0000261703" description="Large ribosomal subunit protein uL13">
    <location>
        <begin position="1"/>
        <end position="142"/>
    </location>
</feature>
<organism>
    <name type="scientific">Burkholderia lata (strain ATCC 17760 / DSM 23089 / LMG 22485 / NCIMB 9086 / R18194 / 383)</name>
    <dbReference type="NCBI Taxonomy" id="482957"/>
    <lineage>
        <taxon>Bacteria</taxon>
        <taxon>Pseudomonadati</taxon>
        <taxon>Pseudomonadota</taxon>
        <taxon>Betaproteobacteria</taxon>
        <taxon>Burkholderiales</taxon>
        <taxon>Burkholderiaceae</taxon>
        <taxon>Burkholderia</taxon>
        <taxon>Burkholderia cepacia complex</taxon>
    </lineage>
</organism>
<reference key="1">
    <citation type="submission" date="2005-10" db="EMBL/GenBank/DDBJ databases">
        <title>Complete sequence of chromosome 1 of Burkholderia sp. 383.</title>
        <authorList>
            <consortium name="US DOE Joint Genome Institute"/>
            <person name="Copeland A."/>
            <person name="Lucas S."/>
            <person name="Lapidus A."/>
            <person name="Barry K."/>
            <person name="Detter J.C."/>
            <person name="Glavina T."/>
            <person name="Hammon N."/>
            <person name="Israni S."/>
            <person name="Pitluck S."/>
            <person name="Chain P."/>
            <person name="Malfatti S."/>
            <person name="Shin M."/>
            <person name="Vergez L."/>
            <person name="Schmutz J."/>
            <person name="Larimer F."/>
            <person name="Land M."/>
            <person name="Kyrpides N."/>
            <person name="Lykidis A."/>
            <person name="Richardson P."/>
        </authorList>
    </citation>
    <scope>NUCLEOTIDE SEQUENCE [LARGE SCALE GENOMIC DNA]</scope>
    <source>
        <strain>ATCC 17760 / DSM 23089 / LMG 22485 / NCIMB 9086 / R18194 / 383</strain>
    </source>
</reference>
<name>RL13_BURL3</name>
<sequence length="142" mass="15985">MKTFSAKAHEVTREWYVIDATDKVLGRVASEVARRLRGKHKPEFTPHVDTGDFIIIINASKLKVTGNKTLDKKYYRHSGYPGGIYETTFGKMQERFPGRALEKAVKGMLPKGPLGYAMIKKLKVYAEATHPHSAQQPKALEI</sequence>
<comment type="function">
    <text evidence="1">This protein is one of the early assembly proteins of the 50S ribosomal subunit, although it is not seen to bind rRNA by itself. It is important during the early stages of 50S assembly.</text>
</comment>
<comment type="subunit">
    <text evidence="1">Part of the 50S ribosomal subunit.</text>
</comment>
<comment type="similarity">
    <text evidence="1">Belongs to the universal ribosomal protein uL13 family.</text>
</comment>
<evidence type="ECO:0000255" key="1">
    <source>
        <dbReference type="HAMAP-Rule" id="MF_01366"/>
    </source>
</evidence>
<evidence type="ECO:0000305" key="2"/>
<accession>Q39JK0</accession>
<gene>
    <name evidence="1" type="primary">rplM</name>
    <name type="ordered locus">Bcep18194_A3765</name>
</gene>
<protein>
    <recommendedName>
        <fullName evidence="1">Large ribosomal subunit protein uL13</fullName>
    </recommendedName>
    <alternativeName>
        <fullName evidence="2">50S ribosomal protein L13</fullName>
    </alternativeName>
</protein>
<dbReference type="EMBL" id="CP000151">
    <property type="protein sequence ID" value="ABB07366.1"/>
    <property type="molecule type" value="Genomic_DNA"/>
</dbReference>
<dbReference type="RefSeq" id="WP_009687896.1">
    <property type="nucleotide sequence ID" value="NZ_WNDV01000019.1"/>
</dbReference>
<dbReference type="SMR" id="Q39JK0"/>
<dbReference type="GeneID" id="98106480"/>
<dbReference type="KEGG" id="bur:Bcep18194_A3765"/>
<dbReference type="HOGENOM" id="CLU_082184_2_2_4"/>
<dbReference type="Proteomes" id="UP000002705">
    <property type="component" value="Chromosome 1"/>
</dbReference>
<dbReference type="GO" id="GO:0022625">
    <property type="term" value="C:cytosolic large ribosomal subunit"/>
    <property type="evidence" value="ECO:0007669"/>
    <property type="project" value="TreeGrafter"/>
</dbReference>
<dbReference type="GO" id="GO:0003729">
    <property type="term" value="F:mRNA binding"/>
    <property type="evidence" value="ECO:0007669"/>
    <property type="project" value="TreeGrafter"/>
</dbReference>
<dbReference type="GO" id="GO:0003735">
    <property type="term" value="F:structural constituent of ribosome"/>
    <property type="evidence" value="ECO:0007669"/>
    <property type="project" value="InterPro"/>
</dbReference>
<dbReference type="GO" id="GO:0017148">
    <property type="term" value="P:negative regulation of translation"/>
    <property type="evidence" value="ECO:0007669"/>
    <property type="project" value="TreeGrafter"/>
</dbReference>
<dbReference type="GO" id="GO:0006412">
    <property type="term" value="P:translation"/>
    <property type="evidence" value="ECO:0007669"/>
    <property type="project" value="UniProtKB-UniRule"/>
</dbReference>
<dbReference type="CDD" id="cd00392">
    <property type="entry name" value="Ribosomal_L13"/>
    <property type="match status" value="1"/>
</dbReference>
<dbReference type="FunFam" id="3.90.1180.10:FF:000001">
    <property type="entry name" value="50S ribosomal protein L13"/>
    <property type="match status" value="1"/>
</dbReference>
<dbReference type="Gene3D" id="3.90.1180.10">
    <property type="entry name" value="Ribosomal protein L13"/>
    <property type="match status" value="1"/>
</dbReference>
<dbReference type="HAMAP" id="MF_01366">
    <property type="entry name" value="Ribosomal_uL13"/>
    <property type="match status" value="1"/>
</dbReference>
<dbReference type="InterPro" id="IPR005822">
    <property type="entry name" value="Ribosomal_uL13"/>
</dbReference>
<dbReference type="InterPro" id="IPR005823">
    <property type="entry name" value="Ribosomal_uL13_bac-type"/>
</dbReference>
<dbReference type="InterPro" id="IPR036899">
    <property type="entry name" value="Ribosomal_uL13_sf"/>
</dbReference>
<dbReference type="NCBIfam" id="TIGR01066">
    <property type="entry name" value="rplM_bact"/>
    <property type="match status" value="1"/>
</dbReference>
<dbReference type="PANTHER" id="PTHR11545:SF2">
    <property type="entry name" value="LARGE RIBOSOMAL SUBUNIT PROTEIN UL13M"/>
    <property type="match status" value="1"/>
</dbReference>
<dbReference type="PANTHER" id="PTHR11545">
    <property type="entry name" value="RIBOSOMAL PROTEIN L13"/>
    <property type="match status" value="1"/>
</dbReference>
<dbReference type="Pfam" id="PF00572">
    <property type="entry name" value="Ribosomal_L13"/>
    <property type="match status" value="1"/>
</dbReference>
<dbReference type="PIRSF" id="PIRSF002181">
    <property type="entry name" value="Ribosomal_L13"/>
    <property type="match status" value="1"/>
</dbReference>
<dbReference type="SUPFAM" id="SSF52161">
    <property type="entry name" value="Ribosomal protein L13"/>
    <property type="match status" value="1"/>
</dbReference>
<proteinExistence type="inferred from homology"/>
<keyword id="KW-0687">Ribonucleoprotein</keyword>
<keyword id="KW-0689">Ribosomal protein</keyword>